<comment type="function">
    <text evidence="1">May be involved in both secretory and endocytic intracellular trafficking in the endosomal/prevacuolar compartments.</text>
</comment>
<comment type="subunit">
    <text evidence="3">Interacts with PRA1B1, PRA1B2, PRA1B3, PRA1B4, PRA1B6 and PRA1E.</text>
</comment>
<comment type="interaction">
    <interactant intactId="EBI-4430098">
        <id>Q9M012</id>
    </interactant>
    <interactant intactId="EBI-4426093">
        <id>Q9SIY7</id>
        <label>PRA1B2</label>
    </interactant>
    <organismsDiffer>false</organismsDiffer>
    <experiments>4</experiments>
</comment>
<comment type="subcellular location">
    <subcellularLocation>
        <location evidence="3">Endosome membrane</location>
        <topology evidence="3">Multi-pass membrane protein</topology>
    </subcellularLocation>
</comment>
<comment type="tissue specificity">
    <text evidence="3">Expressed in roots, lateral roots, lateral root caps, columella cells, leaves, and shoot apex.</text>
</comment>
<comment type="similarity">
    <text evidence="4">Belongs to the PRA1 family.</text>
</comment>
<organism>
    <name type="scientific">Arabidopsis thaliana</name>
    <name type="common">Mouse-ear cress</name>
    <dbReference type="NCBI Taxonomy" id="3702"/>
    <lineage>
        <taxon>Eukaryota</taxon>
        <taxon>Viridiplantae</taxon>
        <taxon>Streptophyta</taxon>
        <taxon>Embryophyta</taxon>
        <taxon>Tracheophyta</taxon>
        <taxon>Spermatophyta</taxon>
        <taxon>Magnoliopsida</taxon>
        <taxon>eudicotyledons</taxon>
        <taxon>Gunneridae</taxon>
        <taxon>Pentapetalae</taxon>
        <taxon>rosids</taxon>
        <taxon>malvids</taxon>
        <taxon>Brassicales</taxon>
        <taxon>Brassicaceae</taxon>
        <taxon>Camelineae</taxon>
        <taxon>Arabidopsis</taxon>
    </lineage>
</organism>
<dbReference type="EMBL" id="AL161946">
    <property type="protein sequence ID" value="CAB82280.1"/>
    <property type="molecule type" value="Genomic_DNA"/>
</dbReference>
<dbReference type="EMBL" id="CP002688">
    <property type="protein sequence ID" value="AED90370.1"/>
    <property type="molecule type" value="Genomic_DNA"/>
</dbReference>
<dbReference type="EMBL" id="BT000918">
    <property type="protein sequence ID" value="AAN41318.1"/>
    <property type="molecule type" value="mRNA"/>
</dbReference>
<dbReference type="PIR" id="T48185">
    <property type="entry name" value="T48185"/>
</dbReference>
<dbReference type="RefSeq" id="NP_195784.1">
    <property type="nucleotide sequence ID" value="NM_120242.3"/>
</dbReference>
<dbReference type="BioGRID" id="16984">
    <property type="interactions" value="14"/>
</dbReference>
<dbReference type="FunCoup" id="Q9M012">
    <property type="interactions" value="1510"/>
</dbReference>
<dbReference type="IntAct" id="Q9M012">
    <property type="interactions" value="15"/>
</dbReference>
<dbReference type="STRING" id="3702.Q9M012"/>
<dbReference type="PaxDb" id="3702-AT5G01640.1"/>
<dbReference type="ProteomicsDB" id="226412"/>
<dbReference type="EnsemblPlants" id="AT5G01640.1">
    <property type="protein sequence ID" value="AT5G01640.1"/>
    <property type="gene ID" value="AT5G01640"/>
</dbReference>
<dbReference type="GeneID" id="831708"/>
<dbReference type="Gramene" id="AT5G01640.1">
    <property type="protein sequence ID" value="AT5G01640.1"/>
    <property type="gene ID" value="AT5G01640"/>
</dbReference>
<dbReference type="KEGG" id="ath:AT5G01640"/>
<dbReference type="Araport" id="AT5G01640"/>
<dbReference type="TAIR" id="AT5G01640">
    <property type="gene designation" value="PRA1.B5"/>
</dbReference>
<dbReference type="eggNOG" id="KOG3142">
    <property type="taxonomic scope" value="Eukaryota"/>
</dbReference>
<dbReference type="HOGENOM" id="CLU_060198_1_0_1"/>
<dbReference type="InParanoid" id="Q9M012"/>
<dbReference type="OMA" id="VNYVCIV"/>
<dbReference type="OrthoDB" id="63113at2759"/>
<dbReference type="PhylomeDB" id="Q9M012"/>
<dbReference type="PRO" id="PR:Q9M012"/>
<dbReference type="Proteomes" id="UP000006548">
    <property type="component" value="Chromosome 5"/>
</dbReference>
<dbReference type="ExpressionAtlas" id="Q9M012">
    <property type="expression patterns" value="baseline and differential"/>
</dbReference>
<dbReference type="GO" id="GO:0005783">
    <property type="term" value="C:endoplasmic reticulum"/>
    <property type="evidence" value="ECO:0000314"/>
    <property type="project" value="TAIR"/>
</dbReference>
<dbReference type="GO" id="GO:0010008">
    <property type="term" value="C:endosome membrane"/>
    <property type="evidence" value="ECO:0007669"/>
    <property type="project" value="UniProtKB-SubCell"/>
</dbReference>
<dbReference type="GO" id="GO:0016192">
    <property type="term" value="P:vesicle-mediated transport"/>
    <property type="evidence" value="ECO:0000314"/>
    <property type="project" value="TAIR"/>
</dbReference>
<dbReference type="InterPro" id="IPR004895">
    <property type="entry name" value="Prenylated_rab_accept_PRA1"/>
</dbReference>
<dbReference type="PANTHER" id="PTHR19317:SF34">
    <property type="entry name" value="PRA1 FAMILY PROTEIN-RELATED"/>
    <property type="match status" value="1"/>
</dbReference>
<dbReference type="PANTHER" id="PTHR19317">
    <property type="entry name" value="PRENYLATED RAB ACCEPTOR 1-RELATED"/>
    <property type="match status" value="1"/>
</dbReference>
<dbReference type="Pfam" id="PF03208">
    <property type="entry name" value="PRA1"/>
    <property type="match status" value="1"/>
</dbReference>
<protein>
    <recommendedName>
        <fullName>PRA1 family protein B5</fullName>
        <shortName>AtPRA1.B5</shortName>
    </recommendedName>
</protein>
<accession>Q9M012</accession>
<feature type="chain" id="PRO_0000352254" description="PRA1 family protein B5">
    <location>
        <begin position="1"/>
        <end position="223"/>
    </location>
</feature>
<feature type="transmembrane region" description="Helical" evidence="2">
    <location>
        <begin position="83"/>
        <end position="103"/>
    </location>
</feature>
<feature type="transmembrane region" description="Helical" evidence="2">
    <location>
        <begin position="105"/>
        <end position="125"/>
    </location>
</feature>
<feature type="transmembrane region" description="Helical" evidence="2">
    <location>
        <begin position="146"/>
        <end position="166"/>
    </location>
</feature>
<feature type="transmembrane region" description="Helical" evidence="2">
    <location>
        <begin position="170"/>
        <end position="190"/>
    </location>
</feature>
<feature type="transmembrane region" description="Helical" evidence="2">
    <location>
        <begin position="196"/>
        <end position="216"/>
    </location>
</feature>
<sequence>MVSTNPPVLPISTTATDTTNQPPIVTAVVESQPPVVRAFVNGVTETVCGGLSRSRPWSELLDRSAFTKPDSLSEAGTRFRKNSSYFRVNYVCIVALILGFSLLAHPFSLILLLCLAASWLFLYLFRPSDRPLILFGRSFSEYETLGGLILSTIAVIFFTSVGSVLISALMIGIATICVHGAFRAPDDLFLDEQDHAASGFLSFIGVPAIPSVAPSASSAASPV</sequence>
<proteinExistence type="evidence at protein level"/>
<name>PR1B5_ARATH</name>
<reference key="1">
    <citation type="journal article" date="2000" name="Nature">
        <title>Sequence and analysis of chromosome 5 of the plant Arabidopsis thaliana.</title>
        <authorList>
            <person name="Tabata S."/>
            <person name="Kaneko T."/>
            <person name="Nakamura Y."/>
            <person name="Kotani H."/>
            <person name="Kato T."/>
            <person name="Asamizu E."/>
            <person name="Miyajima N."/>
            <person name="Sasamoto S."/>
            <person name="Kimura T."/>
            <person name="Hosouchi T."/>
            <person name="Kawashima K."/>
            <person name="Kohara M."/>
            <person name="Matsumoto M."/>
            <person name="Matsuno A."/>
            <person name="Muraki A."/>
            <person name="Nakayama S."/>
            <person name="Nakazaki N."/>
            <person name="Naruo K."/>
            <person name="Okumura S."/>
            <person name="Shinpo S."/>
            <person name="Takeuchi C."/>
            <person name="Wada T."/>
            <person name="Watanabe A."/>
            <person name="Yamada M."/>
            <person name="Yasuda M."/>
            <person name="Sato S."/>
            <person name="de la Bastide M."/>
            <person name="Huang E."/>
            <person name="Spiegel L."/>
            <person name="Gnoj L."/>
            <person name="O'Shaughnessy A."/>
            <person name="Preston R."/>
            <person name="Habermann K."/>
            <person name="Murray J."/>
            <person name="Johnson D."/>
            <person name="Rohlfing T."/>
            <person name="Nelson J."/>
            <person name="Stoneking T."/>
            <person name="Pepin K."/>
            <person name="Spieth J."/>
            <person name="Sekhon M."/>
            <person name="Armstrong J."/>
            <person name="Becker M."/>
            <person name="Belter E."/>
            <person name="Cordum H."/>
            <person name="Cordes M."/>
            <person name="Courtney L."/>
            <person name="Courtney W."/>
            <person name="Dante M."/>
            <person name="Du H."/>
            <person name="Edwards J."/>
            <person name="Fryman J."/>
            <person name="Haakensen B."/>
            <person name="Lamar E."/>
            <person name="Latreille P."/>
            <person name="Leonard S."/>
            <person name="Meyer R."/>
            <person name="Mulvaney E."/>
            <person name="Ozersky P."/>
            <person name="Riley A."/>
            <person name="Strowmatt C."/>
            <person name="Wagner-McPherson C."/>
            <person name="Wollam A."/>
            <person name="Yoakum M."/>
            <person name="Bell M."/>
            <person name="Dedhia N."/>
            <person name="Parnell L."/>
            <person name="Shah R."/>
            <person name="Rodriguez M."/>
            <person name="Hoon See L."/>
            <person name="Vil D."/>
            <person name="Baker J."/>
            <person name="Kirchoff K."/>
            <person name="Toth K."/>
            <person name="King L."/>
            <person name="Bahret A."/>
            <person name="Miller B."/>
            <person name="Marra M.A."/>
            <person name="Martienssen R."/>
            <person name="McCombie W.R."/>
            <person name="Wilson R.K."/>
            <person name="Murphy G."/>
            <person name="Bancroft I."/>
            <person name="Volckaert G."/>
            <person name="Wambutt R."/>
            <person name="Duesterhoeft A."/>
            <person name="Stiekema W."/>
            <person name="Pohl T."/>
            <person name="Entian K.-D."/>
            <person name="Terryn N."/>
            <person name="Hartley N."/>
            <person name="Bent E."/>
            <person name="Johnson S."/>
            <person name="Langham S.-A."/>
            <person name="McCullagh B."/>
            <person name="Robben J."/>
            <person name="Grymonprez B."/>
            <person name="Zimmermann W."/>
            <person name="Ramsperger U."/>
            <person name="Wedler H."/>
            <person name="Balke K."/>
            <person name="Wedler E."/>
            <person name="Peters S."/>
            <person name="van Staveren M."/>
            <person name="Dirkse W."/>
            <person name="Mooijman P."/>
            <person name="Klein Lankhorst R."/>
            <person name="Weitzenegger T."/>
            <person name="Bothe G."/>
            <person name="Rose M."/>
            <person name="Hauf J."/>
            <person name="Berneiser S."/>
            <person name="Hempel S."/>
            <person name="Feldpausch M."/>
            <person name="Lamberth S."/>
            <person name="Villarroel R."/>
            <person name="Gielen J."/>
            <person name="Ardiles W."/>
            <person name="Bents O."/>
            <person name="Lemcke K."/>
            <person name="Kolesov G."/>
            <person name="Mayer K.F.X."/>
            <person name="Rudd S."/>
            <person name="Schoof H."/>
            <person name="Schueller C."/>
            <person name="Zaccaria P."/>
            <person name="Mewes H.-W."/>
            <person name="Bevan M."/>
            <person name="Fransz P.F."/>
        </authorList>
    </citation>
    <scope>NUCLEOTIDE SEQUENCE [LARGE SCALE GENOMIC DNA]</scope>
    <source>
        <strain>cv. Columbia</strain>
    </source>
</reference>
<reference key="2">
    <citation type="journal article" date="2017" name="Plant J.">
        <title>Araport11: a complete reannotation of the Arabidopsis thaliana reference genome.</title>
        <authorList>
            <person name="Cheng C.Y."/>
            <person name="Krishnakumar V."/>
            <person name="Chan A.P."/>
            <person name="Thibaud-Nissen F."/>
            <person name="Schobel S."/>
            <person name="Town C.D."/>
        </authorList>
    </citation>
    <scope>GENOME REANNOTATION</scope>
    <source>
        <strain>cv. Columbia</strain>
    </source>
</reference>
<reference key="3">
    <citation type="journal article" date="2003" name="Science">
        <title>Empirical analysis of transcriptional activity in the Arabidopsis genome.</title>
        <authorList>
            <person name="Yamada K."/>
            <person name="Lim J."/>
            <person name="Dale J.M."/>
            <person name="Chen H."/>
            <person name="Shinn P."/>
            <person name="Palm C.J."/>
            <person name="Southwick A.M."/>
            <person name="Wu H.C."/>
            <person name="Kim C.J."/>
            <person name="Nguyen M."/>
            <person name="Pham P.K."/>
            <person name="Cheuk R.F."/>
            <person name="Karlin-Newmann G."/>
            <person name="Liu S.X."/>
            <person name="Lam B."/>
            <person name="Sakano H."/>
            <person name="Wu T."/>
            <person name="Yu G."/>
            <person name="Miranda M."/>
            <person name="Quach H.L."/>
            <person name="Tripp M."/>
            <person name="Chang C.H."/>
            <person name="Lee J.M."/>
            <person name="Toriumi M.J."/>
            <person name="Chan M.M."/>
            <person name="Tang C.C."/>
            <person name="Onodera C.S."/>
            <person name="Deng J.M."/>
            <person name="Akiyama K."/>
            <person name="Ansari Y."/>
            <person name="Arakawa T."/>
            <person name="Banh J."/>
            <person name="Banno F."/>
            <person name="Bowser L."/>
            <person name="Brooks S.Y."/>
            <person name="Carninci P."/>
            <person name="Chao Q."/>
            <person name="Choy N."/>
            <person name="Enju A."/>
            <person name="Goldsmith A.D."/>
            <person name="Gurjal M."/>
            <person name="Hansen N.F."/>
            <person name="Hayashizaki Y."/>
            <person name="Johnson-Hopson C."/>
            <person name="Hsuan V.W."/>
            <person name="Iida K."/>
            <person name="Karnes M."/>
            <person name="Khan S."/>
            <person name="Koesema E."/>
            <person name="Ishida J."/>
            <person name="Jiang P.X."/>
            <person name="Jones T."/>
            <person name="Kawai J."/>
            <person name="Kamiya A."/>
            <person name="Meyers C."/>
            <person name="Nakajima M."/>
            <person name="Narusaka M."/>
            <person name="Seki M."/>
            <person name="Sakurai T."/>
            <person name="Satou M."/>
            <person name="Tamse R."/>
            <person name="Vaysberg M."/>
            <person name="Wallender E.K."/>
            <person name="Wong C."/>
            <person name="Yamamura Y."/>
            <person name="Yuan S."/>
            <person name="Shinozaki K."/>
            <person name="Davis R.W."/>
            <person name="Theologis A."/>
            <person name="Ecker J.R."/>
        </authorList>
    </citation>
    <scope>NUCLEOTIDE SEQUENCE [LARGE SCALE MRNA]</scope>
    <source>
        <strain>cv. Columbia</strain>
    </source>
</reference>
<reference key="4">
    <citation type="journal article" date="2008" name="Plant Physiol.">
        <title>The PRA1 gene family in Arabidopsis.</title>
        <authorList>
            <person name="Alvim Kamei C.L."/>
            <person name="Boruc J."/>
            <person name="Vandepoele K."/>
            <person name="Van den Daele H."/>
            <person name="Maes S."/>
            <person name="Russinova E."/>
            <person name="Inze D."/>
            <person name="de Veylder L."/>
        </authorList>
    </citation>
    <scope>SUBCELLULAR LOCATION</scope>
    <scope>TISSUE SPECIFICITY</scope>
    <scope>INTERACTION WITH PRA1B1; PRA1B2; PRA1B3; PRA1B4; PRA1B6 AND PRA1E</scope>
    <scope>GENE FAMILY</scope>
    <scope>NOMENCLATURE</scope>
</reference>
<gene>
    <name type="primary">PRA1B5</name>
    <name type="ordered locus">At5g01640</name>
    <name type="ORF">F7A7.160</name>
</gene>
<keyword id="KW-0967">Endosome</keyword>
<keyword id="KW-0472">Membrane</keyword>
<keyword id="KW-1185">Reference proteome</keyword>
<keyword id="KW-0812">Transmembrane</keyword>
<keyword id="KW-1133">Transmembrane helix</keyword>
<keyword id="KW-0813">Transport</keyword>
<evidence type="ECO:0000250" key="1"/>
<evidence type="ECO:0000255" key="2"/>
<evidence type="ECO:0000269" key="3">
    <source>
    </source>
</evidence>
<evidence type="ECO:0000305" key="4"/>